<reference key="1">
    <citation type="journal article" date="2005" name="Infect. Immun.">
        <title>Whole-genome analyses of speciation events in pathogenic Brucellae.</title>
        <authorList>
            <person name="Chain P.S."/>
            <person name="Comerci D.J."/>
            <person name="Tolmasky M.E."/>
            <person name="Larimer F.W."/>
            <person name="Malfatti S.A."/>
            <person name="Vergez L.M."/>
            <person name="Aguero F."/>
            <person name="Land M.L."/>
            <person name="Ugalde R.A."/>
            <person name="Garcia E."/>
        </authorList>
    </citation>
    <scope>NUCLEOTIDE SEQUENCE [LARGE SCALE GENOMIC DNA]</scope>
    <source>
        <strain>2308</strain>
    </source>
</reference>
<proteinExistence type="inferred from homology"/>
<comment type="function">
    <text evidence="1">Catalyzes the attachment of threonine to tRNA(Thr) in a two-step reaction: L-threonine is first activated by ATP to form Thr-AMP and then transferred to the acceptor end of tRNA(Thr). Also edits incorrectly charged L-seryl-tRNA(Thr).</text>
</comment>
<comment type="catalytic activity">
    <reaction evidence="1">
        <text>tRNA(Thr) + L-threonine + ATP = L-threonyl-tRNA(Thr) + AMP + diphosphate + H(+)</text>
        <dbReference type="Rhea" id="RHEA:24624"/>
        <dbReference type="Rhea" id="RHEA-COMP:9670"/>
        <dbReference type="Rhea" id="RHEA-COMP:9704"/>
        <dbReference type="ChEBI" id="CHEBI:15378"/>
        <dbReference type="ChEBI" id="CHEBI:30616"/>
        <dbReference type="ChEBI" id="CHEBI:33019"/>
        <dbReference type="ChEBI" id="CHEBI:57926"/>
        <dbReference type="ChEBI" id="CHEBI:78442"/>
        <dbReference type="ChEBI" id="CHEBI:78534"/>
        <dbReference type="ChEBI" id="CHEBI:456215"/>
        <dbReference type="EC" id="6.1.1.3"/>
    </reaction>
</comment>
<comment type="cofactor">
    <cofactor evidence="1">
        <name>Zn(2+)</name>
        <dbReference type="ChEBI" id="CHEBI:29105"/>
    </cofactor>
    <text evidence="1">Binds 1 zinc ion per subunit.</text>
</comment>
<comment type="subunit">
    <text evidence="1">Homodimer.</text>
</comment>
<comment type="subcellular location">
    <subcellularLocation>
        <location evidence="1">Cytoplasm</location>
    </subcellularLocation>
</comment>
<comment type="similarity">
    <text evidence="1">Belongs to the class-II aminoacyl-tRNA synthetase family.</text>
</comment>
<organism>
    <name type="scientific">Brucella abortus (strain 2308)</name>
    <dbReference type="NCBI Taxonomy" id="359391"/>
    <lineage>
        <taxon>Bacteria</taxon>
        <taxon>Pseudomonadati</taxon>
        <taxon>Pseudomonadota</taxon>
        <taxon>Alphaproteobacteria</taxon>
        <taxon>Hyphomicrobiales</taxon>
        <taxon>Brucellaceae</taxon>
        <taxon>Brucella/Ochrobactrum group</taxon>
        <taxon>Brucella</taxon>
    </lineage>
</organism>
<evidence type="ECO:0000255" key="1">
    <source>
        <dbReference type="HAMAP-Rule" id="MF_00184"/>
    </source>
</evidence>
<evidence type="ECO:0000255" key="2">
    <source>
        <dbReference type="PROSITE-ProRule" id="PRU01228"/>
    </source>
</evidence>
<sequence>MSNTVSLQFPDGSVREYDASMTGAALAESISKSLAKKAVAYAVDGTVRDLSDPLGASGKLEIITREDPRALELIRHDTAHVLAEAVQELFPGTQVTIGPVIENGFYYDFARNEPFTLDDLPVIEKKMREIIQRNKPFTKEVWSREKAKQVFSDKGESYKVELVDAIPAGQDLKIYYQGDWFDLCRGPHMASTGQIGNSFKLMKVAGAYWRGDANNPMLTRIYGTAFANDNDLQAYLHMLEEAEKRDHRRLGREMDLFHFQEEGPGVVFWHAKGWKMFQNLVSYMRRRLDSHGYQEVNTPQVLDKSLWETSGHWGWYRDNMFKVTVAGDDTDDDRVFALKPMNCPGHVQIFKHGLKSYRDLPIKLAEFGNVHRYEPSGALHGLMRVRGFTQDDAHIFCTEEQMAAECLHINDLILSVYKDFGFEEITIKLSTRPEKRVGSDELWDRAESVMMTVLEQIRQQSNNIKTGILPGEGAFYGPKFEYTLKDAIGREWQCGTTQVDFNLPERFGAFYIGADSEKKQPVMIHRAICGSMERFLGILIENFAGHMPLWFAPVQVVVATITSDADEYAKEAAAKLKAAGLQVVTDLRNEKINYKVREHSLQKVPVILVCGKREAEEKTVNMRRLGSRDQESMTLDEAIARLCEEATPPDLLRLKNAG</sequence>
<feature type="chain" id="PRO_1000020350" description="Threonine--tRNA ligase">
    <location>
        <begin position="1"/>
        <end position="658"/>
    </location>
</feature>
<feature type="domain" description="TGS" evidence="2">
    <location>
        <begin position="1"/>
        <end position="64"/>
    </location>
</feature>
<feature type="region of interest" description="Catalytic" evidence="1">
    <location>
        <begin position="246"/>
        <end position="548"/>
    </location>
</feature>
<feature type="binding site" evidence="1">
    <location>
        <position position="343"/>
    </location>
    <ligand>
        <name>Zn(2+)</name>
        <dbReference type="ChEBI" id="CHEBI:29105"/>
    </ligand>
</feature>
<feature type="binding site" evidence="1">
    <location>
        <position position="394"/>
    </location>
    <ligand>
        <name>Zn(2+)</name>
        <dbReference type="ChEBI" id="CHEBI:29105"/>
    </ligand>
</feature>
<feature type="binding site" evidence="1">
    <location>
        <position position="525"/>
    </location>
    <ligand>
        <name>Zn(2+)</name>
        <dbReference type="ChEBI" id="CHEBI:29105"/>
    </ligand>
</feature>
<keyword id="KW-0030">Aminoacyl-tRNA synthetase</keyword>
<keyword id="KW-0067">ATP-binding</keyword>
<keyword id="KW-0963">Cytoplasm</keyword>
<keyword id="KW-0436">Ligase</keyword>
<keyword id="KW-0479">Metal-binding</keyword>
<keyword id="KW-0547">Nucleotide-binding</keyword>
<keyword id="KW-0648">Protein biosynthesis</keyword>
<keyword id="KW-1185">Reference proteome</keyword>
<keyword id="KW-0694">RNA-binding</keyword>
<keyword id="KW-0820">tRNA-binding</keyword>
<keyword id="KW-0862">Zinc</keyword>
<dbReference type="EC" id="6.1.1.3" evidence="1"/>
<dbReference type="EMBL" id="AM040264">
    <property type="protein sequence ID" value="CAJ11049.1"/>
    <property type="molecule type" value="Genomic_DNA"/>
</dbReference>
<dbReference type="RefSeq" id="WP_002969106.1">
    <property type="nucleotide sequence ID" value="NZ_KN046823.1"/>
</dbReference>
<dbReference type="SMR" id="Q2YQ07"/>
<dbReference type="STRING" id="359391.BAB1_1093"/>
<dbReference type="GeneID" id="93016584"/>
<dbReference type="KEGG" id="bmf:BAB1_1093"/>
<dbReference type="PATRIC" id="fig|359391.11.peg.1805"/>
<dbReference type="HOGENOM" id="CLU_008554_0_1_5"/>
<dbReference type="Proteomes" id="UP000002719">
    <property type="component" value="Chromosome I"/>
</dbReference>
<dbReference type="GO" id="GO:0005829">
    <property type="term" value="C:cytosol"/>
    <property type="evidence" value="ECO:0007669"/>
    <property type="project" value="TreeGrafter"/>
</dbReference>
<dbReference type="GO" id="GO:0005524">
    <property type="term" value="F:ATP binding"/>
    <property type="evidence" value="ECO:0007669"/>
    <property type="project" value="UniProtKB-UniRule"/>
</dbReference>
<dbReference type="GO" id="GO:0046872">
    <property type="term" value="F:metal ion binding"/>
    <property type="evidence" value="ECO:0007669"/>
    <property type="project" value="UniProtKB-KW"/>
</dbReference>
<dbReference type="GO" id="GO:0004829">
    <property type="term" value="F:threonine-tRNA ligase activity"/>
    <property type="evidence" value="ECO:0007669"/>
    <property type="project" value="UniProtKB-UniRule"/>
</dbReference>
<dbReference type="GO" id="GO:0000049">
    <property type="term" value="F:tRNA binding"/>
    <property type="evidence" value="ECO:0007669"/>
    <property type="project" value="UniProtKB-KW"/>
</dbReference>
<dbReference type="GO" id="GO:0006435">
    <property type="term" value="P:threonyl-tRNA aminoacylation"/>
    <property type="evidence" value="ECO:0007669"/>
    <property type="project" value="UniProtKB-UniRule"/>
</dbReference>
<dbReference type="CDD" id="cd01667">
    <property type="entry name" value="TGS_ThrRS"/>
    <property type="match status" value="1"/>
</dbReference>
<dbReference type="CDD" id="cd00860">
    <property type="entry name" value="ThrRS_anticodon"/>
    <property type="match status" value="1"/>
</dbReference>
<dbReference type="CDD" id="cd00771">
    <property type="entry name" value="ThrRS_core"/>
    <property type="match status" value="1"/>
</dbReference>
<dbReference type="FunFam" id="3.30.54.20:FF:000002">
    <property type="entry name" value="Threonine--tRNA ligase"/>
    <property type="match status" value="1"/>
</dbReference>
<dbReference type="FunFam" id="3.30.930.10:FF:000002">
    <property type="entry name" value="Threonine--tRNA ligase"/>
    <property type="match status" value="1"/>
</dbReference>
<dbReference type="FunFam" id="3.40.50.800:FF:000001">
    <property type="entry name" value="Threonine--tRNA ligase"/>
    <property type="match status" value="1"/>
</dbReference>
<dbReference type="FunFam" id="3.30.980.10:FF:000005">
    <property type="entry name" value="Threonyl-tRNA synthetase, mitochondrial"/>
    <property type="match status" value="1"/>
</dbReference>
<dbReference type="Gene3D" id="3.10.20.30">
    <property type="match status" value="1"/>
</dbReference>
<dbReference type="Gene3D" id="3.30.54.20">
    <property type="match status" value="1"/>
</dbReference>
<dbReference type="Gene3D" id="3.40.50.800">
    <property type="entry name" value="Anticodon-binding domain"/>
    <property type="match status" value="1"/>
</dbReference>
<dbReference type="Gene3D" id="3.30.930.10">
    <property type="entry name" value="Bira Bifunctional Protein, Domain 2"/>
    <property type="match status" value="1"/>
</dbReference>
<dbReference type="Gene3D" id="3.30.980.10">
    <property type="entry name" value="Threonyl-trna Synthetase, Chain A, domain 2"/>
    <property type="match status" value="1"/>
</dbReference>
<dbReference type="HAMAP" id="MF_00184">
    <property type="entry name" value="Thr_tRNA_synth"/>
    <property type="match status" value="1"/>
</dbReference>
<dbReference type="InterPro" id="IPR002314">
    <property type="entry name" value="aa-tRNA-synt_IIb"/>
</dbReference>
<dbReference type="InterPro" id="IPR006195">
    <property type="entry name" value="aa-tRNA-synth_II"/>
</dbReference>
<dbReference type="InterPro" id="IPR045864">
    <property type="entry name" value="aa-tRNA-synth_II/BPL/LPL"/>
</dbReference>
<dbReference type="InterPro" id="IPR004154">
    <property type="entry name" value="Anticodon-bd"/>
</dbReference>
<dbReference type="InterPro" id="IPR036621">
    <property type="entry name" value="Anticodon-bd_dom_sf"/>
</dbReference>
<dbReference type="InterPro" id="IPR012675">
    <property type="entry name" value="Beta-grasp_dom_sf"/>
</dbReference>
<dbReference type="InterPro" id="IPR004095">
    <property type="entry name" value="TGS"/>
</dbReference>
<dbReference type="InterPro" id="IPR012676">
    <property type="entry name" value="TGS-like"/>
</dbReference>
<dbReference type="InterPro" id="IPR002320">
    <property type="entry name" value="Thr-tRNA-ligase_IIa"/>
</dbReference>
<dbReference type="InterPro" id="IPR018163">
    <property type="entry name" value="Thr/Ala-tRNA-synth_IIc_edit"/>
</dbReference>
<dbReference type="InterPro" id="IPR047246">
    <property type="entry name" value="ThrRS_anticodon"/>
</dbReference>
<dbReference type="InterPro" id="IPR033728">
    <property type="entry name" value="ThrRS_core"/>
</dbReference>
<dbReference type="InterPro" id="IPR012947">
    <property type="entry name" value="tRNA_SAD"/>
</dbReference>
<dbReference type="NCBIfam" id="TIGR00418">
    <property type="entry name" value="thrS"/>
    <property type="match status" value="1"/>
</dbReference>
<dbReference type="PANTHER" id="PTHR11451:SF44">
    <property type="entry name" value="THREONINE--TRNA LIGASE, CHLOROPLASTIC_MITOCHONDRIAL 2"/>
    <property type="match status" value="1"/>
</dbReference>
<dbReference type="PANTHER" id="PTHR11451">
    <property type="entry name" value="THREONINE-TRNA LIGASE"/>
    <property type="match status" value="1"/>
</dbReference>
<dbReference type="Pfam" id="PF03129">
    <property type="entry name" value="HGTP_anticodon"/>
    <property type="match status" value="1"/>
</dbReference>
<dbReference type="Pfam" id="PF02824">
    <property type="entry name" value="TGS"/>
    <property type="match status" value="1"/>
</dbReference>
<dbReference type="Pfam" id="PF00587">
    <property type="entry name" value="tRNA-synt_2b"/>
    <property type="match status" value="1"/>
</dbReference>
<dbReference type="Pfam" id="PF07973">
    <property type="entry name" value="tRNA_SAD"/>
    <property type="match status" value="1"/>
</dbReference>
<dbReference type="PRINTS" id="PR01047">
    <property type="entry name" value="TRNASYNTHTHR"/>
</dbReference>
<dbReference type="SMART" id="SM00863">
    <property type="entry name" value="tRNA_SAD"/>
    <property type="match status" value="1"/>
</dbReference>
<dbReference type="SUPFAM" id="SSF52954">
    <property type="entry name" value="Class II aaRS ABD-related"/>
    <property type="match status" value="1"/>
</dbReference>
<dbReference type="SUPFAM" id="SSF55681">
    <property type="entry name" value="Class II aaRS and biotin synthetases"/>
    <property type="match status" value="1"/>
</dbReference>
<dbReference type="SUPFAM" id="SSF81271">
    <property type="entry name" value="TGS-like"/>
    <property type="match status" value="1"/>
</dbReference>
<dbReference type="SUPFAM" id="SSF55186">
    <property type="entry name" value="ThrRS/AlaRS common domain"/>
    <property type="match status" value="1"/>
</dbReference>
<dbReference type="PROSITE" id="PS50862">
    <property type="entry name" value="AA_TRNA_LIGASE_II"/>
    <property type="match status" value="1"/>
</dbReference>
<dbReference type="PROSITE" id="PS51880">
    <property type="entry name" value="TGS"/>
    <property type="match status" value="1"/>
</dbReference>
<accession>Q2YQ07</accession>
<name>SYT_BRUA2</name>
<protein>
    <recommendedName>
        <fullName evidence="1">Threonine--tRNA ligase</fullName>
        <ecNumber evidence="1">6.1.1.3</ecNumber>
    </recommendedName>
    <alternativeName>
        <fullName evidence="1">Threonyl-tRNA synthetase</fullName>
        <shortName evidence="1">ThrRS</shortName>
    </alternativeName>
</protein>
<gene>
    <name evidence="1" type="primary">thrS</name>
    <name type="ordered locus">BAB1_1093</name>
</gene>